<proteinExistence type="inferred from homology"/>
<dbReference type="EC" id="4.2.1.33" evidence="1"/>
<dbReference type="EMBL" id="AE016879">
    <property type="protein sequence ID" value="AAP25365.1"/>
    <property type="molecule type" value="Genomic_DNA"/>
</dbReference>
<dbReference type="EMBL" id="AE017334">
    <property type="protein sequence ID" value="AAT30518.1"/>
    <property type="molecule type" value="Genomic_DNA"/>
</dbReference>
<dbReference type="EMBL" id="AE017225">
    <property type="protein sequence ID" value="AAT53633.1"/>
    <property type="molecule type" value="Genomic_DNA"/>
</dbReference>
<dbReference type="RefSeq" id="NP_843879.1">
    <property type="nucleotide sequence ID" value="NC_003997.3"/>
</dbReference>
<dbReference type="RefSeq" id="WP_000520131.1">
    <property type="nucleotide sequence ID" value="NZ_WXXJ01000017.1"/>
</dbReference>
<dbReference type="RefSeq" id="YP_027582.1">
    <property type="nucleotide sequence ID" value="NC_005945.1"/>
</dbReference>
<dbReference type="SMR" id="Q81T66"/>
<dbReference type="STRING" id="261594.GBAA_1422"/>
<dbReference type="DNASU" id="1084183"/>
<dbReference type="GeneID" id="45021401"/>
<dbReference type="KEGG" id="ban:BA_1422"/>
<dbReference type="KEGG" id="banh:HYU01_07210"/>
<dbReference type="KEGG" id="bar:GBAA_1422"/>
<dbReference type="KEGG" id="bat:BAS1313"/>
<dbReference type="PATRIC" id="fig|198094.11.peg.1395"/>
<dbReference type="eggNOG" id="COG0065">
    <property type="taxonomic scope" value="Bacteria"/>
</dbReference>
<dbReference type="HOGENOM" id="CLU_006714_3_4_9"/>
<dbReference type="OMA" id="WDDHVVR"/>
<dbReference type="OrthoDB" id="9802769at2"/>
<dbReference type="UniPathway" id="UPA00048">
    <property type="reaction ID" value="UER00071"/>
</dbReference>
<dbReference type="Proteomes" id="UP000000427">
    <property type="component" value="Chromosome"/>
</dbReference>
<dbReference type="Proteomes" id="UP000000594">
    <property type="component" value="Chromosome"/>
</dbReference>
<dbReference type="GO" id="GO:0003861">
    <property type="term" value="F:3-isopropylmalate dehydratase activity"/>
    <property type="evidence" value="ECO:0007669"/>
    <property type="project" value="UniProtKB-UniRule"/>
</dbReference>
<dbReference type="GO" id="GO:0051539">
    <property type="term" value="F:4 iron, 4 sulfur cluster binding"/>
    <property type="evidence" value="ECO:0007669"/>
    <property type="project" value="UniProtKB-KW"/>
</dbReference>
<dbReference type="GO" id="GO:0046872">
    <property type="term" value="F:metal ion binding"/>
    <property type="evidence" value="ECO:0007669"/>
    <property type="project" value="UniProtKB-KW"/>
</dbReference>
<dbReference type="GO" id="GO:0009098">
    <property type="term" value="P:L-leucine biosynthetic process"/>
    <property type="evidence" value="ECO:0007669"/>
    <property type="project" value="UniProtKB-UniRule"/>
</dbReference>
<dbReference type="CDD" id="cd01583">
    <property type="entry name" value="IPMI"/>
    <property type="match status" value="1"/>
</dbReference>
<dbReference type="FunFam" id="3.30.499.10:FF:000007">
    <property type="entry name" value="3-isopropylmalate dehydratase large subunit"/>
    <property type="match status" value="1"/>
</dbReference>
<dbReference type="Gene3D" id="3.30.499.10">
    <property type="entry name" value="Aconitase, domain 3"/>
    <property type="match status" value="2"/>
</dbReference>
<dbReference type="HAMAP" id="MF_01026">
    <property type="entry name" value="LeuC_type1"/>
    <property type="match status" value="1"/>
</dbReference>
<dbReference type="InterPro" id="IPR004430">
    <property type="entry name" value="3-IsopropMal_deHydase_lsu"/>
</dbReference>
<dbReference type="InterPro" id="IPR015931">
    <property type="entry name" value="Acnase/IPM_dHydase_lsu_aba_1/3"/>
</dbReference>
<dbReference type="InterPro" id="IPR001030">
    <property type="entry name" value="Acoase/IPM_deHydtase_lsu_aba"/>
</dbReference>
<dbReference type="InterPro" id="IPR018136">
    <property type="entry name" value="Aconitase_4Fe-4S_BS"/>
</dbReference>
<dbReference type="InterPro" id="IPR036008">
    <property type="entry name" value="Aconitase_4Fe-4S_dom"/>
</dbReference>
<dbReference type="InterPro" id="IPR050067">
    <property type="entry name" value="IPM_dehydratase_rel_enz"/>
</dbReference>
<dbReference type="InterPro" id="IPR033941">
    <property type="entry name" value="IPMI_cat"/>
</dbReference>
<dbReference type="NCBIfam" id="TIGR00170">
    <property type="entry name" value="leuC"/>
    <property type="match status" value="1"/>
</dbReference>
<dbReference type="NCBIfam" id="NF004016">
    <property type="entry name" value="PRK05478.1"/>
    <property type="match status" value="1"/>
</dbReference>
<dbReference type="NCBIfam" id="NF009116">
    <property type="entry name" value="PRK12466.1"/>
    <property type="match status" value="1"/>
</dbReference>
<dbReference type="PANTHER" id="PTHR43822:SF9">
    <property type="entry name" value="3-ISOPROPYLMALATE DEHYDRATASE"/>
    <property type="match status" value="1"/>
</dbReference>
<dbReference type="PANTHER" id="PTHR43822">
    <property type="entry name" value="HOMOACONITASE, MITOCHONDRIAL-RELATED"/>
    <property type="match status" value="1"/>
</dbReference>
<dbReference type="Pfam" id="PF00330">
    <property type="entry name" value="Aconitase"/>
    <property type="match status" value="1"/>
</dbReference>
<dbReference type="PRINTS" id="PR00415">
    <property type="entry name" value="ACONITASE"/>
</dbReference>
<dbReference type="SUPFAM" id="SSF53732">
    <property type="entry name" value="Aconitase iron-sulfur domain"/>
    <property type="match status" value="1"/>
</dbReference>
<dbReference type="PROSITE" id="PS00450">
    <property type="entry name" value="ACONITASE_1"/>
    <property type="match status" value="1"/>
</dbReference>
<dbReference type="PROSITE" id="PS01244">
    <property type="entry name" value="ACONITASE_2"/>
    <property type="match status" value="1"/>
</dbReference>
<feature type="chain" id="PRO_0000076693" description="3-isopropylmalate dehydratase large subunit">
    <location>
        <begin position="1"/>
        <end position="464"/>
    </location>
</feature>
<feature type="binding site" evidence="1">
    <location>
        <position position="337"/>
    </location>
    <ligand>
        <name>[4Fe-4S] cluster</name>
        <dbReference type="ChEBI" id="CHEBI:49883"/>
    </ligand>
</feature>
<feature type="binding site" evidence="1">
    <location>
        <position position="397"/>
    </location>
    <ligand>
        <name>[4Fe-4S] cluster</name>
        <dbReference type="ChEBI" id="CHEBI:49883"/>
    </ligand>
</feature>
<feature type="binding site" evidence="1">
    <location>
        <position position="400"/>
    </location>
    <ligand>
        <name>[4Fe-4S] cluster</name>
        <dbReference type="ChEBI" id="CHEBI:49883"/>
    </ligand>
</feature>
<reference key="1">
    <citation type="journal article" date="2003" name="Nature">
        <title>The genome sequence of Bacillus anthracis Ames and comparison to closely related bacteria.</title>
        <authorList>
            <person name="Read T.D."/>
            <person name="Peterson S.N."/>
            <person name="Tourasse N.J."/>
            <person name="Baillie L.W."/>
            <person name="Paulsen I.T."/>
            <person name="Nelson K.E."/>
            <person name="Tettelin H."/>
            <person name="Fouts D.E."/>
            <person name="Eisen J.A."/>
            <person name="Gill S.R."/>
            <person name="Holtzapple E.K."/>
            <person name="Okstad O.A."/>
            <person name="Helgason E."/>
            <person name="Rilstone J."/>
            <person name="Wu M."/>
            <person name="Kolonay J.F."/>
            <person name="Beanan M.J."/>
            <person name="Dodson R.J."/>
            <person name="Brinkac L.M."/>
            <person name="Gwinn M.L."/>
            <person name="DeBoy R.T."/>
            <person name="Madpu R."/>
            <person name="Daugherty S.C."/>
            <person name="Durkin A.S."/>
            <person name="Haft D.H."/>
            <person name="Nelson W.C."/>
            <person name="Peterson J.D."/>
            <person name="Pop M."/>
            <person name="Khouri H.M."/>
            <person name="Radune D."/>
            <person name="Benton J.L."/>
            <person name="Mahamoud Y."/>
            <person name="Jiang L."/>
            <person name="Hance I.R."/>
            <person name="Weidman J.F."/>
            <person name="Berry K.J."/>
            <person name="Plaut R.D."/>
            <person name="Wolf A.M."/>
            <person name="Watkins K.L."/>
            <person name="Nierman W.C."/>
            <person name="Hazen A."/>
            <person name="Cline R.T."/>
            <person name="Redmond C."/>
            <person name="Thwaite J.E."/>
            <person name="White O."/>
            <person name="Salzberg S.L."/>
            <person name="Thomason B."/>
            <person name="Friedlander A.M."/>
            <person name="Koehler T.M."/>
            <person name="Hanna P.C."/>
            <person name="Kolstoe A.-B."/>
            <person name="Fraser C.M."/>
        </authorList>
    </citation>
    <scope>NUCLEOTIDE SEQUENCE [LARGE SCALE GENOMIC DNA]</scope>
    <source>
        <strain>Ames / isolate Porton</strain>
    </source>
</reference>
<reference key="2">
    <citation type="journal article" date="2009" name="J. Bacteriol.">
        <title>The complete genome sequence of Bacillus anthracis Ames 'Ancestor'.</title>
        <authorList>
            <person name="Ravel J."/>
            <person name="Jiang L."/>
            <person name="Stanley S.T."/>
            <person name="Wilson M.R."/>
            <person name="Decker R.S."/>
            <person name="Read T.D."/>
            <person name="Worsham P."/>
            <person name="Keim P.S."/>
            <person name="Salzberg S.L."/>
            <person name="Fraser-Liggett C.M."/>
            <person name="Rasko D.A."/>
        </authorList>
    </citation>
    <scope>NUCLEOTIDE SEQUENCE [LARGE SCALE GENOMIC DNA]</scope>
    <source>
        <strain>Ames ancestor</strain>
    </source>
</reference>
<reference key="3">
    <citation type="submission" date="2004-01" db="EMBL/GenBank/DDBJ databases">
        <title>Complete genome sequence of Bacillus anthracis Sterne.</title>
        <authorList>
            <person name="Brettin T.S."/>
            <person name="Bruce D."/>
            <person name="Challacombe J.F."/>
            <person name="Gilna P."/>
            <person name="Han C."/>
            <person name="Hill K."/>
            <person name="Hitchcock P."/>
            <person name="Jackson P."/>
            <person name="Keim P."/>
            <person name="Longmire J."/>
            <person name="Lucas S."/>
            <person name="Okinaka R."/>
            <person name="Richardson P."/>
            <person name="Rubin E."/>
            <person name="Tice H."/>
        </authorList>
    </citation>
    <scope>NUCLEOTIDE SEQUENCE [LARGE SCALE GENOMIC DNA]</scope>
    <source>
        <strain>Sterne</strain>
    </source>
</reference>
<accession>Q81T66</accession>
<accession>Q6I1E9</accession>
<accession>Q6KV95</accession>
<keyword id="KW-0004">4Fe-4S</keyword>
<keyword id="KW-0028">Amino-acid biosynthesis</keyword>
<keyword id="KW-0100">Branched-chain amino acid biosynthesis</keyword>
<keyword id="KW-0408">Iron</keyword>
<keyword id="KW-0411">Iron-sulfur</keyword>
<keyword id="KW-0432">Leucine biosynthesis</keyword>
<keyword id="KW-0456">Lyase</keyword>
<keyword id="KW-0479">Metal-binding</keyword>
<keyword id="KW-1185">Reference proteome</keyword>
<protein>
    <recommendedName>
        <fullName evidence="1">3-isopropylmalate dehydratase large subunit</fullName>
        <ecNumber evidence="1">4.2.1.33</ecNumber>
    </recommendedName>
    <alternativeName>
        <fullName evidence="1">Alpha-IPM isomerase</fullName>
        <shortName evidence="1">IPMI</shortName>
    </alternativeName>
    <alternativeName>
        <fullName evidence="1">Isopropylmalate isomerase</fullName>
    </alternativeName>
</protein>
<gene>
    <name evidence="1" type="primary">leuC</name>
    <name type="ordered locus">BA_1422</name>
    <name type="ordered locus">GBAA_1422</name>
    <name type="ordered locus">BAS1313</name>
</gene>
<organism>
    <name type="scientific">Bacillus anthracis</name>
    <dbReference type="NCBI Taxonomy" id="1392"/>
    <lineage>
        <taxon>Bacteria</taxon>
        <taxon>Bacillati</taxon>
        <taxon>Bacillota</taxon>
        <taxon>Bacilli</taxon>
        <taxon>Bacillales</taxon>
        <taxon>Bacillaceae</taxon>
        <taxon>Bacillus</taxon>
        <taxon>Bacillus cereus group</taxon>
    </lineage>
</organism>
<name>LEUC_BACAN</name>
<comment type="function">
    <text evidence="1">Catalyzes the isomerization between 2-isopropylmalate and 3-isopropylmalate, via the formation of 2-isopropylmaleate.</text>
</comment>
<comment type="catalytic activity">
    <reaction evidence="1">
        <text>(2R,3S)-3-isopropylmalate = (2S)-2-isopropylmalate</text>
        <dbReference type="Rhea" id="RHEA:32287"/>
        <dbReference type="ChEBI" id="CHEBI:1178"/>
        <dbReference type="ChEBI" id="CHEBI:35121"/>
        <dbReference type="EC" id="4.2.1.33"/>
    </reaction>
</comment>
<comment type="cofactor">
    <cofactor evidence="1">
        <name>[4Fe-4S] cluster</name>
        <dbReference type="ChEBI" id="CHEBI:49883"/>
    </cofactor>
    <text evidence="1">Binds 1 [4Fe-4S] cluster per subunit.</text>
</comment>
<comment type="pathway">
    <text evidence="1">Amino-acid biosynthesis; L-leucine biosynthesis; L-leucine from 3-methyl-2-oxobutanoate: step 2/4.</text>
</comment>
<comment type="subunit">
    <text evidence="1">Heterodimer of LeuC and LeuD.</text>
</comment>
<comment type="similarity">
    <text evidence="1">Belongs to the aconitase/IPM isomerase family. LeuC type 1 subfamily.</text>
</comment>
<sequence>MGKRLLDKLWERHVVTTNENGLDLLYIDLHLVHEVTSPQAFEGLRLTNRTVRRPDLTFATMDHNIPTKDVWNITDRIAKQQLDTLRENCKQFQVPLADIGDEEQGIVHVIGPELGLTQPGKTIVCGDSHTATHGAFGALAFGIGTSEVEHVLATQTLWQRKPKAMGIELKGKLQKGVYAKDIILHLLSKYGVAVGTGYVMEFYGETIGTMEMEERMTLCNMAIEGGAKAGIIAPDEKTFAYVKGRKYAPRDYETFEKKWFELYTDADAIYDLHISIDVTDLAPYVTWGTNPSMGVRIDEKLPEKHDVNDERAFSYMGLIPGQSTYDIPVQHVFIGSCTNSRLSDLEIAASVVKGRKVKEGVRALVVPGSKRVRDAAMQKGLHHIFEEAGFEWREPGCSMCLGMNPDQVPEGEHCASTSNRNFEGRQGKGARTHLVSPAMAAAAALYGHFVDIRKESYDGAISYS</sequence>
<evidence type="ECO:0000255" key="1">
    <source>
        <dbReference type="HAMAP-Rule" id="MF_01026"/>
    </source>
</evidence>